<gene>
    <name evidence="3" type="primary">Paics</name>
</gene>
<evidence type="ECO:0000250" key="1">
    <source>
        <dbReference type="UniProtKB" id="P22234"/>
    </source>
</evidence>
<evidence type="ECO:0000305" key="2"/>
<evidence type="ECO:0000312" key="3">
    <source>
        <dbReference type="MGI" id="MGI:1914304"/>
    </source>
</evidence>
<evidence type="ECO:0007744" key="4">
    <source>
    </source>
</evidence>
<evidence type="ECO:0007744" key="5">
    <source>
    </source>
</evidence>
<organism>
    <name type="scientific">Mus musculus</name>
    <name type="common">Mouse</name>
    <dbReference type="NCBI Taxonomy" id="10090"/>
    <lineage>
        <taxon>Eukaryota</taxon>
        <taxon>Metazoa</taxon>
        <taxon>Chordata</taxon>
        <taxon>Craniata</taxon>
        <taxon>Vertebrata</taxon>
        <taxon>Euteleostomi</taxon>
        <taxon>Mammalia</taxon>
        <taxon>Eutheria</taxon>
        <taxon>Euarchontoglires</taxon>
        <taxon>Glires</taxon>
        <taxon>Rodentia</taxon>
        <taxon>Myomorpha</taxon>
        <taxon>Muroidea</taxon>
        <taxon>Muridae</taxon>
        <taxon>Murinae</taxon>
        <taxon>Mus</taxon>
        <taxon>Mus</taxon>
    </lineage>
</organism>
<name>PUR6_MOUSE</name>
<protein>
    <recommendedName>
        <fullName evidence="1">Bifunctional phosphoribosylaminoimidazole carboxylase/phosphoribosylaminoimidazole succinocarboxamide synthetase</fullName>
        <shortName evidence="1">PAICS</shortName>
    </recommendedName>
    <domain>
        <recommendedName>
            <fullName evidence="1">Phosphoribosylaminoimidazole carboxylase</fullName>
            <ecNumber evidence="1">4.1.1.21</ecNumber>
        </recommendedName>
        <alternativeName>
            <fullName evidence="1">AIR carboxylase</fullName>
            <shortName evidence="1">AIRC</shortName>
        </alternativeName>
    </domain>
    <domain>
        <recommendedName>
            <fullName evidence="1">Phosphoribosylaminoimidazole succinocarboxamide synthetase</fullName>
            <ecNumber evidence="1">6.3.2.6</ecNumber>
        </recommendedName>
        <alternativeName>
            <fullName evidence="1">SAICAR synthetase</fullName>
        </alternativeName>
    </domain>
</protein>
<accession>Q9DCL9</accession>
<accession>Q9CQ38</accession>
<dbReference type="EC" id="4.1.1.21" evidence="1"/>
<dbReference type="EC" id="6.3.2.6" evidence="1"/>
<dbReference type="EMBL" id="AK002669">
    <property type="protein sequence ID" value="BAB22273.1"/>
    <property type="molecule type" value="mRNA"/>
</dbReference>
<dbReference type="EMBL" id="AK010462">
    <property type="protein sequence ID" value="BAB26957.1"/>
    <property type="molecule type" value="mRNA"/>
</dbReference>
<dbReference type="EMBL" id="AK012118">
    <property type="protein sequence ID" value="BAB28044.1"/>
    <property type="molecule type" value="mRNA"/>
</dbReference>
<dbReference type="EMBL" id="AK146722">
    <property type="protein sequence ID" value="BAE27385.1"/>
    <property type="molecule type" value="mRNA"/>
</dbReference>
<dbReference type="EMBL" id="AK159398">
    <property type="protein sequence ID" value="BAE35051.1"/>
    <property type="molecule type" value="mRNA"/>
</dbReference>
<dbReference type="EMBL" id="AK166264">
    <property type="protein sequence ID" value="BAE38669.1"/>
    <property type="molecule type" value="mRNA"/>
</dbReference>
<dbReference type="EMBL" id="CH466524">
    <property type="protein sequence ID" value="EDL37918.1"/>
    <property type="molecule type" value="Genomic_DNA"/>
</dbReference>
<dbReference type="EMBL" id="BC018153">
    <property type="protein sequence ID" value="AAH18153.1"/>
    <property type="molecule type" value="mRNA"/>
</dbReference>
<dbReference type="EMBL" id="BC052691">
    <property type="protein sequence ID" value="AAH52691.1"/>
    <property type="molecule type" value="mRNA"/>
</dbReference>
<dbReference type="CCDS" id="CCDS19367.1"/>
<dbReference type="RefSeq" id="NP_001343900.1">
    <property type="nucleotide sequence ID" value="NM_001356971.1"/>
</dbReference>
<dbReference type="RefSeq" id="NP_001343901.1">
    <property type="nucleotide sequence ID" value="NM_001356972.1"/>
</dbReference>
<dbReference type="RefSeq" id="NP_001343902.1">
    <property type="nucleotide sequence ID" value="NM_001356973.1"/>
</dbReference>
<dbReference type="RefSeq" id="NP_080215.1">
    <property type="nucleotide sequence ID" value="NM_025939.3"/>
</dbReference>
<dbReference type="RefSeq" id="XP_006535243.1">
    <property type="nucleotide sequence ID" value="XM_006535180.2"/>
</dbReference>
<dbReference type="RefSeq" id="XP_006535244.1">
    <property type="nucleotide sequence ID" value="XM_006535181.3"/>
</dbReference>
<dbReference type="RefSeq" id="XP_006535245.1">
    <property type="nucleotide sequence ID" value="XM_006535182.3"/>
</dbReference>
<dbReference type="RefSeq" id="XP_006535246.1">
    <property type="nucleotide sequence ID" value="XM_006535183.4"/>
</dbReference>
<dbReference type="SMR" id="Q9DCL9"/>
<dbReference type="BioGRID" id="211906">
    <property type="interactions" value="32"/>
</dbReference>
<dbReference type="FunCoup" id="Q9DCL9">
    <property type="interactions" value="2037"/>
</dbReference>
<dbReference type="IntAct" id="Q9DCL9">
    <property type="interactions" value="3"/>
</dbReference>
<dbReference type="STRING" id="10090.ENSMUSP00000031160"/>
<dbReference type="GlyGen" id="Q9DCL9">
    <property type="glycosylation" value="2 sites, 1 N-linked glycan (1 site), 1 O-linked glycan (1 site)"/>
</dbReference>
<dbReference type="iPTMnet" id="Q9DCL9"/>
<dbReference type="PhosphoSitePlus" id="Q9DCL9"/>
<dbReference type="SwissPalm" id="Q9DCL9"/>
<dbReference type="CPTAC" id="non-CPTAC-3741"/>
<dbReference type="jPOST" id="Q9DCL9"/>
<dbReference type="PaxDb" id="10090-ENSMUSP00000031160"/>
<dbReference type="PeptideAtlas" id="Q9DCL9"/>
<dbReference type="ProteomicsDB" id="302032"/>
<dbReference type="Pumba" id="Q9DCL9"/>
<dbReference type="Antibodypedia" id="24027">
    <property type="antibodies" value="347 antibodies from 31 providers"/>
</dbReference>
<dbReference type="DNASU" id="67054"/>
<dbReference type="Ensembl" id="ENSMUST00000031160.16">
    <property type="protein sequence ID" value="ENSMUSP00000031160.10"/>
    <property type="gene ID" value="ENSMUSG00000029247.18"/>
</dbReference>
<dbReference type="Ensembl" id="ENSMUST00000117536.8">
    <property type="protein sequence ID" value="ENSMUSP00000112879.2"/>
    <property type="gene ID" value="ENSMUSG00000029247.18"/>
</dbReference>
<dbReference type="Ensembl" id="ENSMUST00000120912.8">
    <property type="protein sequence ID" value="ENSMUSP00000113483.2"/>
    <property type="gene ID" value="ENSMUSG00000029247.18"/>
</dbReference>
<dbReference type="GeneID" id="67054"/>
<dbReference type="KEGG" id="mmu:67054"/>
<dbReference type="UCSC" id="uc008xvn.2">
    <property type="organism name" value="mouse"/>
</dbReference>
<dbReference type="AGR" id="MGI:1914304"/>
<dbReference type="CTD" id="10606"/>
<dbReference type="MGI" id="MGI:1914304">
    <property type="gene designation" value="Paics"/>
</dbReference>
<dbReference type="VEuPathDB" id="HostDB:ENSMUSG00000029247"/>
<dbReference type="eggNOG" id="KOG2835">
    <property type="taxonomic scope" value="Eukaryota"/>
</dbReference>
<dbReference type="GeneTree" id="ENSGT00390000010172"/>
<dbReference type="HOGENOM" id="CLU_061495_1_0_1"/>
<dbReference type="InParanoid" id="Q9DCL9"/>
<dbReference type="OMA" id="WSDEQII"/>
<dbReference type="OrthoDB" id="9991235at2759"/>
<dbReference type="PhylomeDB" id="Q9DCL9"/>
<dbReference type="TreeFam" id="TF106384"/>
<dbReference type="Reactome" id="R-MMU-73817">
    <property type="pathway name" value="Purine ribonucleoside monophosphate biosynthesis"/>
</dbReference>
<dbReference type="UniPathway" id="UPA00074">
    <property type="reaction ID" value="UER00130"/>
</dbReference>
<dbReference type="UniPathway" id="UPA00074">
    <property type="reaction ID" value="UER00131"/>
</dbReference>
<dbReference type="BioGRID-ORCS" id="67054">
    <property type="hits" value="25 hits in 82 CRISPR screens"/>
</dbReference>
<dbReference type="CD-CODE" id="CE726F99">
    <property type="entry name" value="Postsynaptic density"/>
</dbReference>
<dbReference type="ChiTaRS" id="Paics">
    <property type="organism name" value="mouse"/>
</dbReference>
<dbReference type="PRO" id="PR:Q9DCL9"/>
<dbReference type="Proteomes" id="UP000000589">
    <property type="component" value="Chromosome 5"/>
</dbReference>
<dbReference type="RNAct" id="Q9DCL9">
    <property type="molecule type" value="protein"/>
</dbReference>
<dbReference type="Bgee" id="ENSMUSG00000029247">
    <property type="expression patterns" value="Expressed in gonadal ridge and 268 other cell types or tissues"/>
</dbReference>
<dbReference type="ExpressionAtlas" id="Q9DCL9">
    <property type="expression patterns" value="baseline and differential"/>
</dbReference>
<dbReference type="GO" id="GO:0005737">
    <property type="term" value="C:cytoplasm"/>
    <property type="evidence" value="ECO:0007669"/>
    <property type="project" value="Ensembl"/>
</dbReference>
<dbReference type="GO" id="GO:0005524">
    <property type="term" value="F:ATP binding"/>
    <property type="evidence" value="ECO:0007669"/>
    <property type="project" value="UniProtKB-KW"/>
</dbReference>
<dbReference type="GO" id="GO:0042802">
    <property type="term" value="F:identical protein binding"/>
    <property type="evidence" value="ECO:0007669"/>
    <property type="project" value="Ensembl"/>
</dbReference>
<dbReference type="GO" id="GO:0004638">
    <property type="term" value="F:phosphoribosylaminoimidazole carboxylase activity"/>
    <property type="evidence" value="ECO:0000250"/>
    <property type="project" value="UniProtKB"/>
</dbReference>
<dbReference type="GO" id="GO:0004639">
    <property type="term" value="F:phosphoribosylaminoimidazolesuccinocarboxamide synthase activity"/>
    <property type="evidence" value="ECO:0000250"/>
    <property type="project" value="UniProtKB"/>
</dbReference>
<dbReference type="GO" id="GO:0044208">
    <property type="term" value="P:'de novo' AMP biosynthetic process"/>
    <property type="evidence" value="ECO:0000266"/>
    <property type="project" value="MGI"/>
</dbReference>
<dbReference type="GO" id="GO:0006189">
    <property type="term" value="P:'de novo' IMP biosynthetic process"/>
    <property type="evidence" value="ECO:0000266"/>
    <property type="project" value="MGI"/>
</dbReference>
<dbReference type="GO" id="GO:0097294">
    <property type="term" value="P:'de novo' XMP biosynthetic process"/>
    <property type="evidence" value="ECO:0000266"/>
    <property type="project" value="MGI"/>
</dbReference>
<dbReference type="GO" id="GO:0006177">
    <property type="term" value="P:GMP biosynthetic process"/>
    <property type="evidence" value="ECO:0000266"/>
    <property type="project" value="MGI"/>
</dbReference>
<dbReference type="GO" id="GO:0009113">
    <property type="term" value="P:purine nucleobase biosynthetic process"/>
    <property type="evidence" value="ECO:0000250"/>
    <property type="project" value="UniProtKB"/>
</dbReference>
<dbReference type="CDD" id="cd01416">
    <property type="entry name" value="SAICAR_synt_Ade5"/>
    <property type="match status" value="1"/>
</dbReference>
<dbReference type="FunFam" id="3.30.200.20:FF:000183">
    <property type="entry name" value="Probable multifunctional protein ADE2"/>
    <property type="match status" value="1"/>
</dbReference>
<dbReference type="FunFam" id="3.30.470.20:FF:000020">
    <property type="entry name" value="Probable multifunctional protein ADE2"/>
    <property type="match status" value="1"/>
</dbReference>
<dbReference type="FunFam" id="3.40.50.1970:FF:000006">
    <property type="entry name" value="Probable multifunctional protein ADE2"/>
    <property type="match status" value="1"/>
</dbReference>
<dbReference type="Gene3D" id="3.40.50.1970">
    <property type="match status" value="1"/>
</dbReference>
<dbReference type="Gene3D" id="3.30.470.20">
    <property type="entry name" value="ATP-grasp fold, B domain"/>
    <property type="match status" value="1"/>
</dbReference>
<dbReference type="Gene3D" id="3.30.200.20">
    <property type="entry name" value="Phosphorylase Kinase, domain 1"/>
    <property type="match status" value="1"/>
</dbReference>
<dbReference type="HAMAP" id="MF_02045">
    <property type="entry name" value="PurE_classII"/>
    <property type="match status" value="1"/>
</dbReference>
<dbReference type="HAMAP" id="MF_00137">
    <property type="entry name" value="SAICAR_synth"/>
    <property type="match status" value="1"/>
</dbReference>
<dbReference type="InterPro" id="IPR033626">
    <property type="entry name" value="PurE_classII"/>
</dbReference>
<dbReference type="InterPro" id="IPR000031">
    <property type="entry name" value="PurE_dom"/>
</dbReference>
<dbReference type="InterPro" id="IPR028923">
    <property type="entry name" value="SAICAR_synt/ADE2_N"/>
</dbReference>
<dbReference type="InterPro" id="IPR050089">
    <property type="entry name" value="SAICAR_synthetase"/>
</dbReference>
<dbReference type="InterPro" id="IPR018236">
    <property type="entry name" value="SAICAR_synthetase_CS"/>
</dbReference>
<dbReference type="PANTHER" id="PTHR43599:SF11">
    <property type="entry name" value="BIFUNCTIONAL PHOSPHORIBOSYLAMINOIMIDAZOLE CARBOXYLASE_PHOSPHORIBOSYLAMINOIMIDAZOLE SUCCINOCARBOXAMIDE SYNTHETASE"/>
    <property type="match status" value="1"/>
</dbReference>
<dbReference type="PANTHER" id="PTHR43599">
    <property type="entry name" value="MULTIFUNCTIONAL PROTEIN ADE2"/>
    <property type="match status" value="1"/>
</dbReference>
<dbReference type="Pfam" id="PF00731">
    <property type="entry name" value="AIRC"/>
    <property type="match status" value="1"/>
</dbReference>
<dbReference type="Pfam" id="PF01259">
    <property type="entry name" value="SAICAR_synt"/>
    <property type="match status" value="1"/>
</dbReference>
<dbReference type="SMART" id="SM01001">
    <property type="entry name" value="AIRC"/>
    <property type="match status" value="1"/>
</dbReference>
<dbReference type="SUPFAM" id="SSF52255">
    <property type="entry name" value="N5-CAIR mutase (phosphoribosylaminoimidazole carboxylase, PurE)"/>
    <property type="match status" value="1"/>
</dbReference>
<dbReference type="SUPFAM" id="SSF56104">
    <property type="entry name" value="SAICAR synthase-like"/>
    <property type="match status" value="1"/>
</dbReference>
<dbReference type="PROSITE" id="PS01057">
    <property type="entry name" value="SAICAR_SYNTHETASE_1"/>
    <property type="match status" value="1"/>
</dbReference>
<dbReference type="PROSITE" id="PS01058">
    <property type="entry name" value="SAICAR_SYNTHETASE_2"/>
    <property type="match status" value="1"/>
</dbReference>
<feature type="initiator methionine" description="Removed" evidence="1">
    <location>
        <position position="1"/>
    </location>
</feature>
<feature type="chain" id="PRO_0000075031" description="Bifunctional phosphoribosylaminoimidazole carboxylase/phosphoribosylaminoimidazole succinocarboxamide synthetase">
    <location>
        <begin position="2"/>
        <end position="425"/>
    </location>
</feature>
<feature type="region of interest" description="SAICAR synthetase domain" evidence="1">
    <location>
        <begin position="2"/>
        <end position="260"/>
    </location>
</feature>
<feature type="region of interest" description="Linker" evidence="1">
    <location>
        <begin position="261"/>
        <end position="266"/>
    </location>
</feature>
<feature type="region of interest" description="AIR carboxylase domain" evidence="1">
    <location>
        <begin position="267"/>
        <end position="425"/>
    </location>
</feature>
<feature type="binding site" evidence="1">
    <location>
        <position position="332"/>
    </location>
    <ligand>
        <name>CO2</name>
        <dbReference type="ChEBI" id="CHEBI:16526"/>
    </ligand>
</feature>
<feature type="modified residue" description="N-acetylalanine" evidence="1">
    <location>
        <position position="2"/>
    </location>
</feature>
<feature type="modified residue" description="Phosphotyrosine" evidence="4">
    <location>
        <position position="22"/>
    </location>
</feature>
<feature type="modified residue" description="N6-acetyllysine" evidence="5">
    <location>
        <position position="36"/>
    </location>
</feature>
<feature type="modified residue" description="Phosphoserine" evidence="1">
    <location>
        <position position="107"/>
    </location>
</feature>
<feature type="modified residue" description="Phosphothreonine" evidence="1">
    <location>
        <position position="238"/>
    </location>
</feature>
<feature type="modified residue" description="N6-acetyllysine" evidence="1">
    <location>
        <position position="247"/>
    </location>
</feature>
<feature type="modified residue" description="Phosphoserine" evidence="1">
    <location>
        <position position="274"/>
    </location>
</feature>
<feature type="sequence conflict" description="In Ref. 1; BAB22273." evidence="2" ref="1">
    <original>V</original>
    <variation>Y</variation>
    <location>
        <position position="5"/>
    </location>
</feature>
<proteinExistence type="evidence at protein level"/>
<sequence length="425" mass="47006">MATAVVVNIGKKLYEGKTKEVYELLDTPGRVLLQSKDQITAGNAARKNHLEGKAAISNKITSCIFQLLQEAGIKTAFTKKCGETAFIAPQCEMIPIEWVCRRIATGSFLKRNPGVQEGYKFYPPKVEMFFKDDANNDPQWSEEQLIAAKFCFAGLVIGQTEVDIMSHATQAIFEILEKSWLPQDCTLVDMKIEFGVDVTTKEIVLADVIDNDSWRLWPSGDRSQQKDKQSYRDLKEVTPEGLQMVKKNFEWVADRVELLLKSDSQCRVVVLMGSTSDLGHCEKIKKACGNFGIPCELRVTSAHKGPDETLRIKAEYEGDGIPTVFVSVAGRSNGLGPVLSGNTAYPVISCPPITPDWGAQDVWSSLRLPSGIGCSTILSPEGSAQFAAQIFGLNNHLVWAKLRASILNTWISLKQADKKVRQCNL</sequence>
<reference key="1">
    <citation type="journal article" date="2005" name="Science">
        <title>The transcriptional landscape of the mammalian genome.</title>
        <authorList>
            <person name="Carninci P."/>
            <person name="Kasukawa T."/>
            <person name="Katayama S."/>
            <person name="Gough J."/>
            <person name="Frith M.C."/>
            <person name="Maeda N."/>
            <person name="Oyama R."/>
            <person name="Ravasi T."/>
            <person name="Lenhard B."/>
            <person name="Wells C."/>
            <person name="Kodzius R."/>
            <person name="Shimokawa K."/>
            <person name="Bajic V.B."/>
            <person name="Brenner S.E."/>
            <person name="Batalov S."/>
            <person name="Forrest A.R."/>
            <person name="Zavolan M."/>
            <person name="Davis M.J."/>
            <person name="Wilming L.G."/>
            <person name="Aidinis V."/>
            <person name="Allen J.E."/>
            <person name="Ambesi-Impiombato A."/>
            <person name="Apweiler R."/>
            <person name="Aturaliya R.N."/>
            <person name="Bailey T.L."/>
            <person name="Bansal M."/>
            <person name="Baxter L."/>
            <person name="Beisel K.W."/>
            <person name="Bersano T."/>
            <person name="Bono H."/>
            <person name="Chalk A.M."/>
            <person name="Chiu K.P."/>
            <person name="Choudhary V."/>
            <person name="Christoffels A."/>
            <person name="Clutterbuck D.R."/>
            <person name="Crowe M.L."/>
            <person name="Dalla E."/>
            <person name="Dalrymple B.P."/>
            <person name="de Bono B."/>
            <person name="Della Gatta G."/>
            <person name="di Bernardo D."/>
            <person name="Down T."/>
            <person name="Engstrom P."/>
            <person name="Fagiolini M."/>
            <person name="Faulkner G."/>
            <person name="Fletcher C.F."/>
            <person name="Fukushima T."/>
            <person name="Furuno M."/>
            <person name="Futaki S."/>
            <person name="Gariboldi M."/>
            <person name="Georgii-Hemming P."/>
            <person name="Gingeras T.R."/>
            <person name="Gojobori T."/>
            <person name="Green R.E."/>
            <person name="Gustincich S."/>
            <person name="Harbers M."/>
            <person name="Hayashi Y."/>
            <person name="Hensch T.K."/>
            <person name="Hirokawa N."/>
            <person name="Hill D."/>
            <person name="Huminiecki L."/>
            <person name="Iacono M."/>
            <person name="Ikeo K."/>
            <person name="Iwama A."/>
            <person name="Ishikawa T."/>
            <person name="Jakt M."/>
            <person name="Kanapin A."/>
            <person name="Katoh M."/>
            <person name="Kawasawa Y."/>
            <person name="Kelso J."/>
            <person name="Kitamura H."/>
            <person name="Kitano H."/>
            <person name="Kollias G."/>
            <person name="Krishnan S.P."/>
            <person name="Kruger A."/>
            <person name="Kummerfeld S.K."/>
            <person name="Kurochkin I.V."/>
            <person name="Lareau L.F."/>
            <person name="Lazarevic D."/>
            <person name="Lipovich L."/>
            <person name="Liu J."/>
            <person name="Liuni S."/>
            <person name="McWilliam S."/>
            <person name="Madan Babu M."/>
            <person name="Madera M."/>
            <person name="Marchionni L."/>
            <person name="Matsuda H."/>
            <person name="Matsuzawa S."/>
            <person name="Miki H."/>
            <person name="Mignone F."/>
            <person name="Miyake S."/>
            <person name="Morris K."/>
            <person name="Mottagui-Tabar S."/>
            <person name="Mulder N."/>
            <person name="Nakano N."/>
            <person name="Nakauchi H."/>
            <person name="Ng P."/>
            <person name="Nilsson R."/>
            <person name="Nishiguchi S."/>
            <person name="Nishikawa S."/>
            <person name="Nori F."/>
            <person name="Ohara O."/>
            <person name="Okazaki Y."/>
            <person name="Orlando V."/>
            <person name="Pang K.C."/>
            <person name="Pavan W.J."/>
            <person name="Pavesi G."/>
            <person name="Pesole G."/>
            <person name="Petrovsky N."/>
            <person name="Piazza S."/>
            <person name="Reed J."/>
            <person name="Reid J.F."/>
            <person name="Ring B.Z."/>
            <person name="Ringwald M."/>
            <person name="Rost B."/>
            <person name="Ruan Y."/>
            <person name="Salzberg S.L."/>
            <person name="Sandelin A."/>
            <person name="Schneider C."/>
            <person name="Schoenbach C."/>
            <person name="Sekiguchi K."/>
            <person name="Semple C.A."/>
            <person name="Seno S."/>
            <person name="Sessa L."/>
            <person name="Sheng Y."/>
            <person name="Shibata Y."/>
            <person name="Shimada H."/>
            <person name="Shimada K."/>
            <person name="Silva D."/>
            <person name="Sinclair B."/>
            <person name="Sperling S."/>
            <person name="Stupka E."/>
            <person name="Sugiura K."/>
            <person name="Sultana R."/>
            <person name="Takenaka Y."/>
            <person name="Taki K."/>
            <person name="Tammoja K."/>
            <person name="Tan S.L."/>
            <person name="Tang S."/>
            <person name="Taylor M.S."/>
            <person name="Tegner J."/>
            <person name="Teichmann S.A."/>
            <person name="Ueda H.R."/>
            <person name="van Nimwegen E."/>
            <person name="Verardo R."/>
            <person name="Wei C.L."/>
            <person name="Yagi K."/>
            <person name="Yamanishi H."/>
            <person name="Zabarovsky E."/>
            <person name="Zhu S."/>
            <person name="Zimmer A."/>
            <person name="Hide W."/>
            <person name="Bult C."/>
            <person name="Grimmond S.M."/>
            <person name="Teasdale R.D."/>
            <person name="Liu E.T."/>
            <person name="Brusic V."/>
            <person name="Quackenbush J."/>
            <person name="Wahlestedt C."/>
            <person name="Mattick J.S."/>
            <person name="Hume D.A."/>
            <person name="Kai C."/>
            <person name="Sasaki D."/>
            <person name="Tomaru Y."/>
            <person name="Fukuda S."/>
            <person name="Kanamori-Katayama M."/>
            <person name="Suzuki M."/>
            <person name="Aoki J."/>
            <person name="Arakawa T."/>
            <person name="Iida J."/>
            <person name="Imamura K."/>
            <person name="Itoh M."/>
            <person name="Kato T."/>
            <person name="Kawaji H."/>
            <person name="Kawagashira N."/>
            <person name="Kawashima T."/>
            <person name="Kojima M."/>
            <person name="Kondo S."/>
            <person name="Konno H."/>
            <person name="Nakano K."/>
            <person name="Ninomiya N."/>
            <person name="Nishio T."/>
            <person name="Okada M."/>
            <person name="Plessy C."/>
            <person name="Shibata K."/>
            <person name="Shiraki T."/>
            <person name="Suzuki S."/>
            <person name="Tagami M."/>
            <person name="Waki K."/>
            <person name="Watahiki A."/>
            <person name="Okamura-Oho Y."/>
            <person name="Suzuki H."/>
            <person name="Kawai J."/>
            <person name="Hayashizaki Y."/>
        </authorList>
    </citation>
    <scope>NUCLEOTIDE SEQUENCE [LARGE SCALE MRNA]</scope>
    <source>
        <strain>C57BL/6J</strain>
        <tissue>Heart</tissue>
        <tissue>Kidney</tissue>
        <tissue>Mammary gland</tissue>
    </source>
</reference>
<reference key="2">
    <citation type="submission" date="2005-07" db="EMBL/GenBank/DDBJ databases">
        <authorList>
            <person name="Mural R.J."/>
            <person name="Adams M.D."/>
            <person name="Myers E.W."/>
            <person name="Smith H.O."/>
            <person name="Venter J.C."/>
        </authorList>
    </citation>
    <scope>NUCLEOTIDE SEQUENCE [LARGE SCALE GENOMIC DNA]</scope>
</reference>
<reference key="3">
    <citation type="journal article" date="2004" name="Genome Res.">
        <title>The status, quality, and expansion of the NIH full-length cDNA project: the Mammalian Gene Collection (MGC).</title>
        <authorList>
            <consortium name="The MGC Project Team"/>
        </authorList>
    </citation>
    <scope>NUCLEOTIDE SEQUENCE [LARGE SCALE MRNA]</scope>
    <source>
        <strain>C57BL/6J</strain>
        <strain>Czech II</strain>
        <tissue>Brain</tissue>
    </source>
</reference>
<reference key="4">
    <citation type="journal article" date="2009" name="Mol. Cell. Proteomics">
        <title>Large scale localization of protein phosphorylation by use of electron capture dissociation mass spectrometry.</title>
        <authorList>
            <person name="Sweet S.M."/>
            <person name="Bailey C.M."/>
            <person name="Cunningham D.L."/>
            <person name="Heath J.K."/>
            <person name="Cooper H.J."/>
        </authorList>
    </citation>
    <scope>PHOSPHORYLATION [LARGE SCALE ANALYSIS] AT TYR-22</scope>
    <scope>IDENTIFICATION BY MASS SPECTROMETRY [LARGE SCALE ANALYSIS]</scope>
    <source>
        <tissue>Embryonic fibroblast</tissue>
    </source>
</reference>
<reference key="5">
    <citation type="journal article" date="2010" name="Cell">
        <title>A tissue-specific atlas of mouse protein phosphorylation and expression.</title>
        <authorList>
            <person name="Huttlin E.L."/>
            <person name="Jedrychowski M.P."/>
            <person name="Elias J.E."/>
            <person name="Goswami T."/>
            <person name="Rad R."/>
            <person name="Beausoleil S.A."/>
            <person name="Villen J."/>
            <person name="Haas W."/>
            <person name="Sowa M.E."/>
            <person name="Gygi S.P."/>
        </authorList>
    </citation>
    <scope>IDENTIFICATION BY MASS SPECTROMETRY [LARGE SCALE ANALYSIS]</scope>
    <source>
        <tissue>Brain</tissue>
        <tissue>Brown adipose tissue</tissue>
        <tissue>Heart</tissue>
        <tissue>Kidney</tissue>
        <tissue>Liver</tissue>
        <tissue>Lung</tissue>
        <tissue>Pancreas</tissue>
        <tissue>Spleen</tissue>
        <tissue>Testis</tissue>
    </source>
</reference>
<reference key="6">
    <citation type="journal article" date="2013" name="Mol. Cell">
        <title>SIRT5-mediated lysine desuccinylation impacts diverse metabolic pathways.</title>
        <authorList>
            <person name="Park J."/>
            <person name="Chen Y."/>
            <person name="Tishkoff D.X."/>
            <person name="Peng C."/>
            <person name="Tan M."/>
            <person name="Dai L."/>
            <person name="Xie Z."/>
            <person name="Zhang Y."/>
            <person name="Zwaans B.M."/>
            <person name="Skinner M.E."/>
            <person name="Lombard D.B."/>
            <person name="Zhao Y."/>
        </authorList>
    </citation>
    <scope>ACETYLATION [LARGE SCALE ANALYSIS] AT LYS-36</scope>
    <scope>IDENTIFICATION BY MASS SPECTROMETRY [LARGE SCALE ANALYSIS]</scope>
    <source>
        <tissue>Embryonic fibroblast</tissue>
    </source>
</reference>
<comment type="function">
    <text evidence="1">Bifunctional phosphoribosylaminoimidazole carboxylase and phosphoribosylaminoimidazole succinocarboxamide synthetase catalyzing two reactions of the de novo purine biosynthetic pathway.</text>
</comment>
<comment type="catalytic activity">
    <reaction evidence="1">
        <text>5-amino-1-(5-phospho-D-ribosyl)imidazole-4-carboxylate + L-aspartate + ATP = (2S)-2-[5-amino-1-(5-phospho-beta-D-ribosyl)imidazole-4-carboxamido]succinate + ADP + phosphate + 2 H(+)</text>
        <dbReference type="Rhea" id="RHEA:22628"/>
        <dbReference type="ChEBI" id="CHEBI:15378"/>
        <dbReference type="ChEBI" id="CHEBI:29991"/>
        <dbReference type="ChEBI" id="CHEBI:30616"/>
        <dbReference type="ChEBI" id="CHEBI:43474"/>
        <dbReference type="ChEBI" id="CHEBI:58443"/>
        <dbReference type="ChEBI" id="CHEBI:77657"/>
        <dbReference type="ChEBI" id="CHEBI:456216"/>
        <dbReference type="EC" id="6.3.2.6"/>
    </reaction>
    <physiologicalReaction direction="left-to-right" evidence="1">
        <dbReference type="Rhea" id="RHEA:22629"/>
    </physiologicalReaction>
</comment>
<comment type="catalytic activity">
    <reaction evidence="1">
        <text>5-amino-1-(5-phospho-D-ribosyl)imidazole-4-carboxylate + H(+) = 5-amino-1-(5-phospho-beta-D-ribosyl)imidazole + CO2</text>
        <dbReference type="Rhea" id="RHEA:10792"/>
        <dbReference type="ChEBI" id="CHEBI:15378"/>
        <dbReference type="ChEBI" id="CHEBI:16526"/>
        <dbReference type="ChEBI" id="CHEBI:77657"/>
        <dbReference type="ChEBI" id="CHEBI:137981"/>
        <dbReference type="EC" id="4.1.1.21"/>
    </reaction>
    <physiologicalReaction direction="right-to-left" evidence="1">
        <dbReference type="Rhea" id="RHEA:10794"/>
    </physiologicalReaction>
</comment>
<comment type="pathway">
    <text evidence="1">Purine metabolism; IMP biosynthesis via de novo pathway; 5-amino-1-(5-phospho-D-ribosyl)imidazole-4-carboxamide from 5-amino-1-(5-phospho-D-ribosyl)imidazole-4-carboxylate: step 1/2.</text>
</comment>
<comment type="pathway">
    <text evidence="1">Purine metabolism; IMP biosynthesis via de novo pathway; 5-amino-1-(5-phospho-D-ribosyl)imidazole-4-carboxylate from 5-amino-1-(5-phospho-D-ribosyl)imidazole (carboxylase route): step 1/1.</text>
</comment>
<comment type="subunit">
    <text evidence="1">Homooctamer.</text>
</comment>
<comment type="similarity">
    <text evidence="2">In the N-terminal section; belongs to the SAICAR synthetase family.</text>
</comment>
<comment type="similarity">
    <text evidence="2">In the C-terminal section; belongs to the AIR carboxylase family. Class II subfamily.</text>
</comment>
<keyword id="KW-0007">Acetylation</keyword>
<keyword id="KW-0067">ATP-binding</keyword>
<keyword id="KW-0210">Decarboxylase</keyword>
<keyword id="KW-0436">Ligase</keyword>
<keyword id="KW-0456">Lyase</keyword>
<keyword id="KW-0511">Multifunctional enzyme</keyword>
<keyword id="KW-0547">Nucleotide-binding</keyword>
<keyword id="KW-0597">Phosphoprotein</keyword>
<keyword id="KW-0658">Purine biosynthesis</keyword>
<keyword id="KW-1185">Reference proteome</keyword>